<proteinExistence type="evidence at protein level"/>
<accession>Q03660</accession>
<accession>D6W043</accession>
<name>TR130_YEAST</name>
<organism>
    <name type="scientific">Saccharomyces cerevisiae (strain ATCC 204508 / S288c)</name>
    <name type="common">Baker's yeast</name>
    <dbReference type="NCBI Taxonomy" id="559292"/>
    <lineage>
        <taxon>Eukaryota</taxon>
        <taxon>Fungi</taxon>
        <taxon>Dikarya</taxon>
        <taxon>Ascomycota</taxon>
        <taxon>Saccharomycotina</taxon>
        <taxon>Saccharomycetes</taxon>
        <taxon>Saccharomycetales</taxon>
        <taxon>Saccharomycetaceae</taxon>
        <taxon>Saccharomyces</taxon>
    </lineage>
</organism>
<protein>
    <recommendedName>
        <fullName>Trafficking protein particle complex II-specific subunit 130</fullName>
        <shortName>TRAPP II-specific subunit 130</shortName>
    </recommendedName>
    <alternativeName>
        <fullName>Transport protein particle 130 kDa subunit</fullName>
    </alternativeName>
</protein>
<reference key="1">
    <citation type="journal article" date="1997" name="Nature">
        <title>The nucleotide sequence of Saccharomyces cerevisiae chromosome XIII.</title>
        <authorList>
            <person name="Bowman S."/>
            <person name="Churcher C.M."/>
            <person name="Badcock K."/>
            <person name="Brown D."/>
            <person name="Chillingworth T."/>
            <person name="Connor R."/>
            <person name="Dedman K."/>
            <person name="Devlin K."/>
            <person name="Gentles S."/>
            <person name="Hamlin N."/>
            <person name="Hunt S."/>
            <person name="Jagels K."/>
            <person name="Lye G."/>
            <person name="Moule S."/>
            <person name="Odell C."/>
            <person name="Pearson D."/>
            <person name="Rajandream M.A."/>
            <person name="Rice P."/>
            <person name="Skelton J."/>
            <person name="Walsh S.V."/>
            <person name="Whitehead S."/>
            <person name="Barrell B.G."/>
        </authorList>
    </citation>
    <scope>NUCLEOTIDE SEQUENCE [LARGE SCALE GENOMIC DNA]</scope>
    <source>
        <strain>ATCC 204508 / S288c</strain>
    </source>
</reference>
<reference key="2">
    <citation type="journal article" date="2014" name="G3 (Bethesda)">
        <title>The reference genome sequence of Saccharomyces cerevisiae: Then and now.</title>
        <authorList>
            <person name="Engel S.R."/>
            <person name="Dietrich F.S."/>
            <person name="Fisk D.G."/>
            <person name="Binkley G."/>
            <person name="Balakrishnan R."/>
            <person name="Costanzo M.C."/>
            <person name="Dwight S.S."/>
            <person name="Hitz B.C."/>
            <person name="Karra K."/>
            <person name="Nash R.S."/>
            <person name="Weng S."/>
            <person name="Wong E.D."/>
            <person name="Lloyd P."/>
            <person name="Skrzypek M.S."/>
            <person name="Miyasato S.R."/>
            <person name="Simison M."/>
            <person name="Cherry J.M."/>
        </authorList>
    </citation>
    <scope>GENOME REANNOTATION</scope>
    <source>
        <strain>ATCC 204508 / S288c</strain>
    </source>
</reference>
<reference key="3">
    <citation type="journal article" date="1998" name="EMBO J.">
        <title>TRAPP, a highly conserved novel complex on the cis-Golgi that mediates vesicle docking and fusion.</title>
        <authorList>
            <person name="Sacher M."/>
            <person name="Jiang Y."/>
            <person name="Barrowman J."/>
            <person name="Scarpa A."/>
            <person name="Burston J."/>
            <person name="Zhang L."/>
            <person name="Schieltz D."/>
            <person name="Yates J.R. III"/>
            <person name="Abeliovich H."/>
            <person name="Ferro-Novick S."/>
        </authorList>
    </citation>
    <scope>IDENTIFICATION IN THE TRAPP II COMPLEX</scope>
</reference>
<reference key="4">
    <citation type="journal article" date="2000" name="Eur. J. Cell Biol.">
        <title>Identification and characterization of five new subunits of TRAPP.</title>
        <authorList>
            <person name="Sacher M."/>
            <person name="Barrowman J."/>
            <person name="Schieltz D."/>
            <person name="Yates J.R. III"/>
            <person name="Ferro-Novick S."/>
        </authorList>
    </citation>
    <scope>FUNCTION</scope>
</reference>
<reference key="5">
    <citation type="journal article" date="2001" name="Mol. Cell">
        <title>TRAPP I implicated in the specificity of tethering in ER-to-Golgi transport.</title>
        <authorList>
            <person name="Sacher M."/>
            <person name="Barrowman J."/>
            <person name="Wang W."/>
            <person name="Horecka J."/>
            <person name="Zhang Y."/>
            <person name="Pypaert M."/>
            <person name="Ferro-Novick S."/>
        </authorList>
    </citation>
    <scope>FUNCTION OF THE TRAPP II COMPLEX</scope>
    <scope>IDENTIFICATION IN THE TRAPP II COMPLEX</scope>
    <scope>SUBCELLULAR LOCATION</scope>
</reference>
<reference key="6">
    <citation type="journal article" date="2002" name="Curr. Genet.">
        <title>Mutation of TRS130, which encodes a component of the TRAPP II complex, activates transcription of OCH1 in Saccharomyces cerevisiae.</title>
        <authorList>
            <person name="Yamamoto K."/>
            <person name="Jigami Y."/>
        </authorList>
    </citation>
    <scope>FUNCTION</scope>
    <scope>INTERACTION WITH YPT31 AND YPT32</scope>
</reference>
<reference key="7">
    <citation type="journal article" date="2003" name="Nature">
        <title>Global analysis of protein expression in yeast.</title>
        <authorList>
            <person name="Ghaemmaghami S."/>
            <person name="Huh W.-K."/>
            <person name="Bower K."/>
            <person name="Howson R.W."/>
            <person name="Belle A."/>
            <person name="Dephoure N."/>
            <person name="O'Shea E.K."/>
            <person name="Weissman J.S."/>
        </authorList>
    </citation>
    <scope>LEVEL OF PROTEIN EXPRESSION [LARGE SCALE ANALYSIS]</scope>
</reference>
<reference key="8">
    <citation type="journal article" date="2005" name="J. Cell Biol.">
        <title>Mutants in trs120 disrupt traffic from the early endosome to the late Golgi.</title>
        <authorList>
            <person name="Cai H."/>
            <person name="Zhang Y."/>
            <person name="Pypaert M."/>
            <person name="Walker L."/>
            <person name="Ferro-Novick S."/>
        </authorList>
    </citation>
    <scope>FUNCTION</scope>
</reference>
<reference key="9">
    <citation type="journal article" date="2007" name="Mol. Biol. Cell">
        <title>The role of Trs65 in the Ypt/Rab guanine nucleotide exchange factor function of the TRAPP II complex.</title>
        <authorList>
            <person name="Liang Y."/>
            <person name="Morozova N."/>
            <person name="Tokarev A.A."/>
            <person name="Mulholland J.W."/>
            <person name="Segev N."/>
        </authorList>
    </citation>
    <scope>FUNCTION</scope>
    <scope>INTERACTION WITH TRS65</scope>
</reference>
<reference key="10">
    <citation type="journal article" date="2010" name="Nat. Struct. Mol. Biol.">
        <title>Molecular architecture of the TRAPPII complex and implications for vesicle tethering.</title>
        <authorList>
            <person name="Yip C.K."/>
            <person name="Berscheminski J."/>
            <person name="Walz T."/>
        </authorList>
    </citation>
    <scope>IDENTIFICATION IN THE TRAP II COMPLEX</scope>
    <scope>FUNCTION OF THE TRAP II COMPLEX</scope>
</reference>
<reference key="11">
    <citation type="journal article" date="2013" name="Traffic">
        <title>Trs130 participates in autophagy through GTPases Ypt31/32 in Saccharomyces cerevisiae.</title>
        <authorList>
            <person name="Zou S."/>
            <person name="Chen Y."/>
            <person name="Liu Y."/>
            <person name="Segev N."/>
            <person name="Yu S."/>
            <person name="Liu Y."/>
            <person name="Min G."/>
            <person name="Ye M."/>
            <person name="Zeng Y."/>
            <person name="Zhu X."/>
            <person name="Hong B."/>
            <person name="Bjorn L.O."/>
            <person name="Liang Y."/>
            <person name="Li S."/>
            <person name="Xie Z."/>
        </authorList>
    </citation>
    <scope>FUNCTION</scope>
</reference>
<sequence length="1102" mass="128131">MDKEIYCGSVPVSYFDPFDLFESLRPEFQQILPLDNIHWKAFDGTVRTVNRLPIELIPEGRGEADKSNDEQPFIRFLIVNCISIDQYRAKVRPLVRQWLPNLESVSSSTGEKMIYKPIILLYANSEVVDSNLFKSVSLMEKFGKDFPHVQTLEVRSVYRSPKERQEFWNQFSQKIKASVLSIFQKRLTHLQHSLANLQKGNNFEEQLLTREKLYELYVVFNILEDASLELQKIKKEILRRNMNMPDGKLQVPFESSSKSDESLGSIIIEGTLDKFQLHKYFFIRRLRLLKLEDQTLTAFVGAFQLIKNFIESISIEYRKSVRLLEFKHYFITSMLSYFEFENVSNPLLCEIKAELLMLKRDNWVQGVMATSGYRLMDKNYPNSDVKYKFDLLKETFVDETVFQENFLTLTKEILSLFNKCEGKRQRIVDILSIEIGLLYYQGKKYEEAVSLFLSCYEYYTQTNWNSIGLKILQVFIDSLSHCPKLDVLQIDGESVSASAVLTNAFLNILKLCKDNDSKEIWWKKFMDLQMKNNIHLMYPLDGLFEVTLNSKVHLARANVSAIEVNLKSYGFPEDISTKTMRLSLKNMGGDVIVFGASDFLLKKGENKLILECRDIMYGEFSLLSFEIIVEGITFVKEFPENQDEFIVVPEIYCKESTKVLVKQAHNLNLGEYALELKSVQSDALESLQVEVEVQKNIGNMKNLPVSFSMDEIQARKRYNTPFENVRLEYYLLDQITAFDLIIKTSFTKKNDQGTFGETKKVRIQCYLQLSVSVEDIFKKDIFFFKFLLNSSVREEPVILYSSELSAPDTRNDYNIRGDYIATTPALITFDGNESFINCYEITANNNFDSKDIFNLKVRYNTLKEQLDCFITDAVLIEGDVEWFILFEKWKTFWELEILKKLKYDYDAFKENRIIRLLKTSIDLNKTKSKIRNLCIEKAVLDKILICLNKVSRGIAVCNTDMDEYVRNLVPKQLTVPVQLPGFEQFFHVQFEQMETSHDALHDTIATIGNSLSYTVIVENLSGQWGQDVIDDGGYIFEILSSNEWLIHGQKRCAIKEKRKEFEVHLIPLKKGYLNFPRVEITNINGKSCRVDHSNAFESILIF</sequence>
<gene>
    <name type="primary">TRS130</name>
    <name type="ordered locus">YMR218C</name>
    <name type="ORF">YM8261.12C</name>
</gene>
<evidence type="ECO:0000269" key="1">
    <source>
    </source>
</evidence>
<evidence type="ECO:0000269" key="2">
    <source>
    </source>
</evidence>
<evidence type="ECO:0000269" key="3">
    <source>
    </source>
</evidence>
<evidence type="ECO:0000269" key="4">
    <source>
    </source>
</evidence>
<evidence type="ECO:0000269" key="5">
    <source>
    </source>
</evidence>
<evidence type="ECO:0000269" key="6">
    <source>
    </source>
</evidence>
<evidence type="ECO:0000269" key="7">
    <source>
    </source>
</evidence>
<evidence type="ECO:0000269" key="8">
    <source>
    </source>
</evidence>
<evidence type="ECO:0000269" key="9">
    <source>
    </source>
</evidence>
<evidence type="ECO:0000305" key="10"/>
<evidence type="ECO:0000305" key="11">
    <source>
    </source>
</evidence>
<dbReference type="EMBL" id="Z49809">
    <property type="protein sequence ID" value="CAA89933.1"/>
    <property type="molecule type" value="Genomic_DNA"/>
</dbReference>
<dbReference type="EMBL" id="BK006946">
    <property type="protein sequence ID" value="DAA10117.1"/>
    <property type="molecule type" value="Genomic_DNA"/>
</dbReference>
<dbReference type="PIR" id="S55100">
    <property type="entry name" value="S55100"/>
</dbReference>
<dbReference type="RefSeq" id="NP_013945.1">
    <property type="nucleotide sequence ID" value="NM_001182725.1"/>
</dbReference>
<dbReference type="PDB" id="7E2C">
    <property type="method" value="EM"/>
    <property type="resolution" value="4.18 A"/>
    <property type="chains" value="I=1-1102"/>
</dbReference>
<dbReference type="PDB" id="7E2D">
    <property type="method" value="EM"/>
    <property type="resolution" value="3.71 A"/>
    <property type="chains" value="I=1-1102"/>
</dbReference>
<dbReference type="PDB" id="7E8S">
    <property type="method" value="EM"/>
    <property type="resolution" value="4.36 A"/>
    <property type="chains" value="I/T=1-1102"/>
</dbReference>
<dbReference type="PDB" id="7E8T">
    <property type="method" value="EM"/>
    <property type="resolution" value="3.80 A"/>
    <property type="chains" value="I=1-1102"/>
</dbReference>
<dbReference type="PDB" id="7E93">
    <property type="method" value="EM"/>
    <property type="resolution" value="6.54 A"/>
    <property type="chains" value="I/T=1-1102"/>
</dbReference>
<dbReference type="PDB" id="7E94">
    <property type="method" value="EM"/>
    <property type="resolution" value="4.67 A"/>
    <property type="chains" value="I/T=1-1102"/>
</dbReference>
<dbReference type="PDB" id="7EA3">
    <property type="method" value="EM"/>
    <property type="resolution" value="4.31 A"/>
    <property type="chains" value="I/V=1-1102"/>
</dbReference>
<dbReference type="PDB" id="7U05">
    <property type="method" value="EM"/>
    <property type="resolution" value="3.70 A"/>
    <property type="chains" value="B/b=1-1102"/>
</dbReference>
<dbReference type="PDB" id="7U06">
    <property type="method" value="EM"/>
    <property type="resolution" value="4.20 A"/>
    <property type="chains" value="B/b=1-1102"/>
</dbReference>
<dbReference type="PDBsum" id="7E2C"/>
<dbReference type="PDBsum" id="7E2D"/>
<dbReference type="PDBsum" id="7E8S"/>
<dbReference type="PDBsum" id="7E8T"/>
<dbReference type="PDBsum" id="7E93"/>
<dbReference type="PDBsum" id="7E94"/>
<dbReference type="PDBsum" id="7EA3"/>
<dbReference type="PDBsum" id="7U05"/>
<dbReference type="PDBsum" id="7U06"/>
<dbReference type="EMDB" id="EMD-26254"/>
<dbReference type="EMDB" id="EMD-26255"/>
<dbReference type="EMDB" id="EMD-30954"/>
<dbReference type="EMDB" id="EMD-30955"/>
<dbReference type="EMDB" id="EMD-31021"/>
<dbReference type="EMDB" id="EMD-31022"/>
<dbReference type="EMDB" id="EMD-31027"/>
<dbReference type="EMDB" id="EMD-31028"/>
<dbReference type="EMDB" id="EMD-31038"/>
<dbReference type="SMR" id="Q03660"/>
<dbReference type="BioGRID" id="35396">
    <property type="interactions" value="123"/>
</dbReference>
<dbReference type="ComplexPortal" id="CPX-1939">
    <property type="entry name" value="TRAPP II complex"/>
</dbReference>
<dbReference type="DIP" id="DIP-6482N"/>
<dbReference type="FunCoup" id="Q03660">
    <property type="interactions" value="93"/>
</dbReference>
<dbReference type="IntAct" id="Q03660">
    <property type="interactions" value="16"/>
</dbReference>
<dbReference type="STRING" id="4932.YMR218C"/>
<dbReference type="iPTMnet" id="Q03660"/>
<dbReference type="PaxDb" id="4932-YMR218C"/>
<dbReference type="PeptideAtlas" id="Q03660"/>
<dbReference type="EnsemblFungi" id="YMR218C_mRNA">
    <property type="protein sequence ID" value="YMR218C"/>
    <property type="gene ID" value="YMR218C"/>
</dbReference>
<dbReference type="GeneID" id="855258"/>
<dbReference type="KEGG" id="sce:YMR218C"/>
<dbReference type="AGR" id="SGD:S000004831"/>
<dbReference type="SGD" id="S000004831">
    <property type="gene designation" value="TRS130"/>
</dbReference>
<dbReference type="VEuPathDB" id="FungiDB:YMR218C"/>
<dbReference type="eggNOG" id="KOG1931">
    <property type="taxonomic scope" value="Eukaryota"/>
</dbReference>
<dbReference type="GeneTree" id="ENSGT00390000003873"/>
<dbReference type="HOGENOM" id="CLU_009596_0_0_1"/>
<dbReference type="InParanoid" id="Q03660"/>
<dbReference type="OMA" id="DYLNAYE"/>
<dbReference type="OrthoDB" id="10256906at2759"/>
<dbReference type="BioCyc" id="YEAST:G3O-32900-MONOMER"/>
<dbReference type="Reactome" id="R-SCE-204005">
    <property type="pathway name" value="COPII-mediated vesicle transport"/>
</dbReference>
<dbReference type="Reactome" id="R-SCE-8876198">
    <property type="pathway name" value="RAB GEFs exchange GTP for GDP on RABs"/>
</dbReference>
<dbReference type="BioGRID-ORCS" id="855258">
    <property type="hits" value="0 hits in 10 CRISPR screens"/>
</dbReference>
<dbReference type="PRO" id="PR:Q03660"/>
<dbReference type="Proteomes" id="UP000002311">
    <property type="component" value="Chromosome XIII"/>
</dbReference>
<dbReference type="RNAct" id="Q03660">
    <property type="molecule type" value="protein"/>
</dbReference>
<dbReference type="GO" id="GO:0005829">
    <property type="term" value="C:cytosol"/>
    <property type="evidence" value="ECO:0007669"/>
    <property type="project" value="GOC"/>
</dbReference>
<dbReference type="GO" id="GO:0005769">
    <property type="term" value="C:early endosome"/>
    <property type="evidence" value="ECO:0000314"/>
    <property type="project" value="SGD"/>
</dbReference>
<dbReference type="GO" id="GO:0005802">
    <property type="term" value="C:trans-Golgi network"/>
    <property type="evidence" value="ECO:0000314"/>
    <property type="project" value="SGD"/>
</dbReference>
<dbReference type="GO" id="GO:1990071">
    <property type="term" value="C:TRAPPII protein complex"/>
    <property type="evidence" value="ECO:0000314"/>
    <property type="project" value="SGD"/>
</dbReference>
<dbReference type="GO" id="GO:0032258">
    <property type="term" value="P:cytoplasm to vacuole targeting by the Cvt pathway"/>
    <property type="evidence" value="ECO:0000315"/>
    <property type="project" value="SGD"/>
</dbReference>
<dbReference type="GO" id="GO:0034498">
    <property type="term" value="P:early endosome to Golgi transport"/>
    <property type="evidence" value="ECO:0000315"/>
    <property type="project" value="SGD"/>
</dbReference>
<dbReference type="GO" id="GO:0006891">
    <property type="term" value="P:intra-Golgi vesicle-mediated transport"/>
    <property type="evidence" value="ECO:0000315"/>
    <property type="project" value="SGD"/>
</dbReference>
<dbReference type="GO" id="GO:0016236">
    <property type="term" value="P:macroautophagy"/>
    <property type="evidence" value="ECO:0000315"/>
    <property type="project" value="SGD"/>
</dbReference>
<dbReference type="GO" id="GO:0042147">
    <property type="term" value="P:retrograde transport, endosome to Golgi"/>
    <property type="evidence" value="ECO:0000303"/>
    <property type="project" value="ComplexPortal"/>
</dbReference>
<dbReference type="InterPro" id="IPR056915">
    <property type="entry name" value="Ig_TR130_2nd"/>
</dbReference>
<dbReference type="InterPro" id="IPR056916">
    <property type="entry name" value="NTS_TR130"/>
</dbReference>
<dbReference type="InterPro" id="IPR022233">
    <property type="entry name" value="TRAPP_II_complex_TRAPPC10_C"/>
</dbReference>
<dbReference type="InterPro" id="IPR045126">
    <property type="entry name" value="TRAPPC10/Trs130"/>
</dbReference>
<dbReference type="InterPro" id="IPR056913">
    <property type="entry name" value="TRAPPC10/Trs130_N"/>
</dbReference>
<dbReference type="PANTHER" id="PTHR13251">
    <property type="entry name" value="EPILEPSY HOLOPROSENCEPHALY CANDIDATE 1/TMEM1"/>
    <property type="match status" value="1"/>
</dbReference>
<dbReference type="PANTHER" id="PTHR13251:SF3">
    <property type="entry name" value="TRAFFICKING PROTEIN PARTICLE COMPLEX SUBUNIT 10"/>
    <property type="match status" value="1"/>
</dbReference>
<dbReference type="Pfam" id="PF24966">
    <property type="entry name" value="Ig_TR130_2nd"/>
    <property type="match status" value="1"/>
</dbReference>
<dbReference type="Pfam" id="PF24967">
    <property type="entry name" value="NTS_TR130"/>
    <property type="match status" value="1"/>
</dbReference>
<dbReference type="Pfam" id="PF12584">
    <property type="entry name" value="TRAPPC10"/>
    <property type="match status" value="1"/>
</dbReference>
<dbReference type="Pfam" id="PF23036">
    <property type="entry name" value="TRAPPC10_1st"/>
    <property type="match status" value="1"/>
</dbReference>
<comment type="function">
    <text evidence="1 2 3 5 6 7 8">Specific subunit of the TRAPP II complex, a highly conserved vesicle tethering complex that functions in the late Golgi as a guanine nucleotide exchange factor (GEF) for the Golgi YPT1 GTPase. TRS130 plays a role in the YPT GEF activity of TRAPP II in concert with the two other TRAPP II-specific subunits TRS65 and TRS120. Required for both the cytoplasm-to-vacuole targeting (Cvt) pathway and starvation-induced autophagy through its role in ATG8 and ATG9 trafficking.</text>
</comment>
<comment type="subunit">
    <text evidence="2 3 6 7 9">Part of the multisubunit TRAPP (transport protein particle) II complex composed of BET3, BET5, TRS20, TRS23, TRS31, TRS33, TRS65, TRS120 and TRS130. Interacts with YPT31 and YPT32.</text>
</comment>
<comment type="interaction">
    <interactant intactId="EBI-19461">
        <id>Q03660</id>
    </interactant>
    <interactant intactId="EBI-8013">
        <id>P32806</id>
        <label>GYP6</label>
    </interactant>
    <organismsDiffer>false</organismsDiffer>
    <experiments>2</experiments>
</comment>
<comment type="interaction">
    <interactant intactId="EBI-19461">
        <id>Q03660</id>
    </interactant>
    <interactant intactId="EBI-22370">
        <id>P32613</id>
        <label>TCA17</label>
    </interactant>
    <organismsDiffer>false</organismsDiffer>
    <experiments>8</experiments>
</comment>
<comment type="interaction">
    <interactant intactId="EBI-19461">
        <id>Q03660</id>
    </interactant>
    <interactant intactId="EBI-19468">
        <id>P38334</id>
        <label>TRS20</label>
    </interactant>
    <organismsDiffer>false</organismsDiffer>
    <experiments>3</experiments>
</comment>
<comment type="interaction">
    <interactant intactId="EBI-19461">
        <id>Q03660</id>
    </interactant>
    <interactant intactId="EBI-9900">
        <id>P32893</id>
        <label>TRS65</label>
    </interactant>
    <organismsDiffer>false</organismsDiffer>
    <experiments>4</experiments>
</comment>
<comment type="subcellular location">
    <subcellularLocation>
        <location evidence="11">Golgi apparatus</location>
    </subcellularLocation>
</comment>
<comment type="miscellaneous">
    <text evidence="4">Present with 432 molecules/cell in log phase SD medium.</text>
</comment>
<comment type="similarity">
    <text evidence="10">Belongs to the TMEM1 family.</text>
</comment>
<feature type="chain" id="PRO_0000193512" description="Trafficking protein particle complex II-specific subunit 130">
    <location>
        <begin position="1"/>
        <end position="1102"/>
    </location>
</feature>
<keyword id="KW-0002">3D-structure</keyword>
<keyword id="KW-0072">Autophagy</keyword>
<keyword id="KW-0333">Golgi apparatus</keyword>
<keyword id="KW-1185">Reference proteome</keyword>
<keyword id="KW-0813">Transport</keyword>